<reference key="1">
    <citation type="journal article" date="2008" name="BMC Genomics">
        <title>Genomics of an extreme psychrophile, Psychromonas ingrahamii.</title>
        <authorList>
            <person name="Riley M."/>
            <person name="Staley J.T."/>
            <person name="Danchin A."/>
            <person name="Wang T.Z."/>
            <person name="Brettin T.S."/>
            <person name="Hauser L.J."/>
            <person name="Land M.L."/>
            <person name="Thompson L.S."/>
        </authorList>
    </citation>
    <scope>NUCLEOTIDE SEQUENCE [LARGE SCALE GENOMIC DNA]</scope>
    <source>
        <strain>DSM 17664 / CCUG 51855 / 37</strain>
    </source>
</reference>
<feature type="chain" id="PRO_0000304350" description="Leucyl/phenylalanyl-tRNA--protein transferase">
    <location>
        <begin position="1"/>
        <end position="238"/>
    </location>
</feature>
<protein>
    <recommendedName>
        <fullName evidence="1">Leucyl/phenylalanyl-tRNA--protein transferase</fullName>
        <ecNumber evidence="1">2.3.2.6</ecNumber>
    </recommendedName>
    <alternativeName>
        <fullName evidence="1">L/F-transferase</fullName>
    </alternativeName>
    <alternativeName>
        <fullName evidence="1">Leucyltransferase</fullName>
    </alternativeName>
    <alternativeName>
        <fullName evidence="1">Phenyalanyltransferase</fullName>
    </alternativeName>
</protein>
<proteinExistence type="inferred from homology"/>
<organism>
    <name type="scientific">Psychromonas ingrahamii (strain DSM 17664 / CCUG 51855 / 37)</name>
    <dbReference type="NCBI Taxonomy" id="357804"/>
    <lineage>
        <taxon>Bacteria</taxon>
        <taxon>Pseudomonadati</taxon>
        <taxon>Pseudomonadota</taxon>
        <taxon>Gammaproteobacteria</taxon>
        <taxon>Alteromonadales</taxon>
        <taxon>Psychromonadaceae</taxon>
        <taxon>Psychromonas</taxon>
    </lineage>
</organism>
<evidence type="ECO:0000255" key="1">
    <source>
        <dbReference type="HAMAP-Rule" id="MF_00688"/>
    </source>
</evidence>
<sequence length="238" mass="27072">MTLYIPELPINNTIFPDTSLALSDPDGLLAMGGDLSPQRIIKAYQQGIFPWFSDGQPILWWSPSQRAIIQPNLVHISSSMKKIISKNNFSLSINHAFHDVIDACAAPRGNQNETWITFDMIAAYQKLHQQGIAHSIEVWRDNKLVGGLYGVCIGSVFCGESMFSKEDNTSKIAFIALCQHFDKFKGQLIDCQILTKHLQSFGVQNESRDNFINYLNQYKNININKKCWDKQTIFIKNR</sequence>
<keyword id="KW-0012">Acyltransferase</keyword>
<keyword id="KW-0963">Cytoplasm</keyword>
<keyword id="KW-1185">Reference proteome</keyword>
<keyword id="KW-0808">Transferase</keyword>
<gene>
    <name evidence="1" type="primary">aat</name>
    <name type="ordered locus">Ping_2258</name>
</gene>
<dbReference type="EC" id="2.3.2.6" evidence="1"/>
<dbReference type="EMBL" id="CP000510">
    <property type="protein sequence ID" value="ABM03999.1"/>
    <property type="molecule type" value="Genomic_DNA"/>
</dbReference>
<dbReference type="RefSeq" id="WP_011770559.1">
    <property type="nucleotide sequence ID" value="NC_008709.1"/>
</dbReference>
<dbReference type="SMR" id="A1SWY4"/>
<dbReference type="STRING" id="357804.Ping_2258"/>
<dbReference type="KEGG" id="pin:Ping_2258"/>
<dbReference type="eggNOG" id="COG2360">
    <property type="taxonomic scope" value="Bacteria"/>
</dbReference>
<dbReference type="HOGENOM" id="CLU_075045_0_0_6"/>
<dbReference type="OrthoDB" id="9790282at2"/>
<dbReference type="Proteomes" id="UP000000639">
    <property type="component" value="Chromosome"/>
</dbReference>
<dbReference type="GO" id="GO:0005737">
    <property type="term" value="C:cytoplasm"/>
    <property type="evidence" value="ECO:0007669"/>
    <property type="project" value="UniProtKB-SubCell"/>
</dbReference>
<dbReference type="GO" id="GO:0008914">
    <property type="term" value="F:leucyl-tRNA--protein transferase activity"/>
    <property type="evidence" value="ECO:0007669"/>
    <property type="project" value="UniProtKB-UniRule"/>
</dbReference>
<dbReference type="GO" id="GO:0030163">
    <property type="term" value="P:protein catabolic process"/>
    <property type="evidence" value="ECO:0007669"/>
    <property type="project" value="UniProtKB-UniRule"/>
</dbReference>
<dbReference type="FunFam" id="3.30.70.3550:FF:000001">
    <property type="entry name" value="Leucyl/phenylalanyl-tRNA--protein transferase"/>
    <property type="match status" value="1"/>
</dbReference>
<dbReference type="FunFam" id="3.40.630.70:FF:000001">
    <property type="entry name" value="Leucyl/phenylalanyl-tRNA--protein transferase"/>
    <property type="match status" value="1"/>
</dbReference>
<dbReference type="Gene3D" id="3.40.630.70">
    <property type="entry name" value="Leucyl/phenylalanyl-tRNA-protein transferase, C-terminal domain"/>
    <property type="match status" value="1"/>
</dbReference>
<dbReference type="Gene3D" id="3.30.70.3550">
    <property type="entry name" value="Leucyl/phenylalanyl-tRNA-protein transferase, N-terminal domain"/>
    <property type="match status" value="1"/>
</dbReference>
<dbReference type="HAMAP" id="MF_00688">
    <property type="entry name" value="Leu_Phe_trans"/>
    <property type="match status" value="1"/>
</dbReference>
<dbReference type="InterPro" id="IPR016181">
    <property type="entry name" value="Acyl_CoA_acyltransferase"/>
</dbReference>
<dbReference type="InterPro" id="IPR004616">
    <property type="entry name" value="Leu/Phe-tRNA_Trfase"/>
</dbReference>
<dbReference type="InterPro" id="IPR042203">
    <property type="entry name" value="Leu/Phe-tRNA_Trfase_C"/>
</dbReference>
<dbReference type="InterPro" id="IPR042221">
    <property type="entry name" value="Leu/Phe-tRNA_Trfase_N"/>
</dbReference>
<dbReference type="NCBIfam" id="TIGR00667">
    <property type="entry name" value="aat"/>
    <property type="match status" value="1"/>
</dbReference>
<dbReference type="PANTHER" id="PTHR30098">
    <property type="entry name" value="LEUCYL/PHENYLALANYL-TRNA--PROTEIN TRANSFERASE"/>
    <property type="match status" value="1"/>
</dbReference>
<dbReference type="PANTHER" id="PTHR30098:SF2">
    <property type="entry name" value="LEUCYL_PHENYLALANYL-TRNA--PROTEIN TRANSFERASE"/>
    <property type="match status" value="1"/>
</dbReference>
<dbReference type="Pfam" id="PF03588">
    <property type="entry name" value="Leu_Phe_trans"/>
    <property type="match status" value="1"/>
</dbReference>
<dbReference type="SUPFAM" id="SSF55729">
    <property type="entry name" value="Acyl-CoA N-acyltransferases (Nat)"/>
    <property type="match status" value="1"/>
</dbReference>
<accession>A1SWY4</accession>
<comment type="function">
    <text evidence="1">Functions in the N-end rule pathway of protein degradation where it conjugates Leu, Phe and, less efficiently, Met from aminoacyl-tRNAs to the N-termini of proteins containing an N-terminal arginine or lysine.</text>
</comment>
<comment type="catalytic activity">
    <reaction evidence="1">
        <text>N-terminal L-lysyl-[protein] + L-leucyl-tRNA(Leu) = N-terminal L-leucyl-L-lysyl-[protein] + tRNA(Leu) + H(+)</text>
        <dbReference type="Rhea" id="RHEA:12340"/>
        <dbReference type="Rhea" id="RHEA-COMP:9613"/>
        <dbReference type="Rhea" id="RHEA-COMP:9622"/>
        <dbReference type="Rhea" id="RHEA-COMP:12670"/>
        <dbReference type="Rhea" id="RHEA-COMP:12671"/>
        <dbReference type="ChEBI" id="CHEBI:15378"/>
        <dbReference type="ChEBI" id="CHEBI:65249"/>
        <dbReference type="ChEBI" id="CHEBI:78442"/>
        <dbReference type="ChEBI" id="CHEBI:78494"/>
        <dbReference type="ChEBI" id="CHEBI:133043"/>
        <dbReference type="EC" id="2.3.2.6"/>
    </reaction>
</comment>
<comment type="catalytic activity">
    <reaction evidence="1">
        <text>N-terminal L-arginyl-[protein] + L-leucyl-tRNA(Leu) = N-terminal L-leucyl-L-arginyl-[protein] + tRNA(Leu) + H(+)</text>
        <dbReference type="Rhea" id="RHEA:50416"/>
        <dbReference type="Rhea" id="RHEA-COMP:9613"/>
        <dbReference type="Rhea" id="RHEA-COMP:9622"/>
        <dbReference type="Rhea" id="RHEA-COMP:12672"/>
        <dbReference type="Rhea" id="RHEA-COMP:12673"/>
        <dbReference type="ChEBI" id="CHEBI:15378"/>
        <dbReference type="ChEBI" id="CHEBI:64719"/>
        <dbReference type="ChEBI" id="CHEBI:78442"/>
        <dbReference type="ChEBI" id="CHEBI:78494"/>
        <dbReference type="ChEBI" id="CHEBI:133044"/>
        <dbReference type="EC" id="2.3.2.6"/>
    </reaction>
</comment>
<comment type="catalytic activity">
    <reaction evidence="1">
        <text>L-phenylalanyl-tRNA(Phe) + an N-terminal L-alpha-aminoacyl-[protein] = an N-terminal L-phenylalanyl-L-alpha-aminoacyl-[protein] + tRNA(Phe)</text>
        <dbReference type="Rhea" id="RHEA:43632"/>
        <dbReference type="Rhea" id="RHEA-COMP:9668"/>
        <dbReference type="Rhea" id="RHEA-COMP:9699"/>
        <dbReference type="Rhea" id="RHEA-COMP:10636"/>
        <dbReference type="Rhea" id="RHEA-COMP:10637"/>
        <dbReference type="ChEBI" id="CHEBI:78442"/>
        <dbReference type="ChEBI" id="CHEBI:78531"/>
        <dbReference type="ChEBI" id="CHEBI:78597"/>
        <dbReference type="ChEBI" id="CHEBI:83561"/>
        <dbReference type="EC" id="2.3.2.6"/>
    </reaction>
</comment>
<comment type="subcellular location">
    <subcellularLocation>
        <location evidence="1">Cytoplasm</location>
    </subcellularLocation>
</comment>
<comment type="similarity">
    <text evidence="1">Belongs to the L/F-transferase family.</text>
</comment>
<name>LFTR_PSYIN</name>